<evidence type="ECO:0000250" key="1"/>
<evidence type="ECO:0000255" key="2"/>
<evidence type="ECO:0000255" key="3">
    <source>
        <dbReference type="PROSITE-ProRule" id="PRU00691"/>
    </source>
</evidence>
<evidence type="ECO:0000256" key="4">
    <source>
        <dbReference type="SAM" id="MobiDB-lite"/>
    </source>
</evidence>
<evidence type="ECO:0000269" key="5">
    <source>
    </source>
</evidence>
<evidence type="ECO:0000269" key="6">
    <source>
    </source>
</evidence>
<evidence type="ECO:0000269" key="7">
    <source>
    </source>
</evidence>
<evidence type="ECO:0000269" key="8">
    <source>
    </source>
</evidence>
<evidence type="ECO:0000305" key="9"/>
<feature type="transit peptide" description="Chloroplast" evidence="2">
    <location>
        <begin position="1"/>
        <end position="57"/>
    </location>
</feature>
<feature type="chain" id="PRO_0000034156" description="Thioredoxin F1, chloroplastic">
    <location>
        <begin position="58"/>
        <end position="178"/>
    </location>
</feature>
<feature type="domain" description="Thioredoxin" evidence="3">
    <location>
        <begin position="58"/>
        <end position="174"/>
    </location>
</feature>
<feature type="region of interest" description="Disordered" evidence="4">
    <location>
        <begin position="1"/>
        <end position="22"/>
    </location>
</feature>
<feature type="compositionally biased region" description="Polar residues" evidence="4">
    <location>
        <begin position="7"/>
        <end position="18"/>
    </location>
</feature>
<feature type="active site" description="Nucleophile" evidence="1">
    <location>
        <position position="99"/>
    </location>
</feature>
<feature type="active site" description="Nucleophile" evidence="1">
    <location>
        <position position="102"/>
    </location>
</feature>
<feature type="site" description="Deprotonates C-terminal active site Cys" evidence="1">
    <location>
        <position position="93"/>
    </location>
</feature>
<feature type="site" description="Contributes to redox potential value" evidence="1">
    <location>
        <position position="100"/>
    </location>
</feature>
<feature type="site" description="Contributes to redox potential value" evidence="1">
    <location>
        <position position="101"/>
    </location>
</feature>
<feature type="modified residue" description="S-glutathionyl cysteine; transient" evidence="5">
    <location>
        <position position="126"/>
    </location>
</feature>
<feature type="disulfide bond" description="Redox-active" evidence="3">
    <location>
        <begin position="99"/>
        <end position="102"/>
    </location>
</feature>
<feature type="sequence conflict" description="In Ref. 1; AAD35003." evidence="9" ref="1">
    <original>A</original>
    <variation>P</variation>
    <location>
        <position position="134"/>
    </location>
</feature>
<name>TRXF1_ARATH</name>
<gene>
    <name type="ordered locus">At3g02730</name>
    <name type="ORF">F13E7.33</name>
</gene>
<reference key="1">
    <citation type="journal article" date="1999" name="Trends Plant Sci.">
        <title>Plant thioredoxins and glutaredoxins: identity and putative roles.</title>
        <authorList>
            <person name="Meyer Y."/>
            <person name="Verdoucq L."/>
            <person name="Vignols F."/>
        </authorList>
    </citation>
    <scope>NUCLEOTIDE SEQUENCE [MRNA]</scope>
</reference>
<reference key="2">
    <citation type="journal article" date="2000" name="Nature">
        <title>Sequence and analysis of chromosome 3 of the plant Arabidopsis thaliana.</title>
        <authorList>
            <person name="Salanoubat M."/>
            <person name="Lemcke K."/>
            <person name="Rieger M."/>
            <person name="Ansorge W."/>
            <person name="Unseld M."/>
            <person name="Fartmann B."/>
            <person name="Valle G."/>
            <person name="Bloecker H."/>
            <person name="Perez-Alonso M."/>
            <person name="Obermaier B."/>
            <person name="Delseny M."/>
            <person name="Boutry M."/>
            <person name="Grivell L.A."/>
            <person name="Mache R."/>
            <person name="Puigdomenech P."/>
            <person name="De Simone V."/>
            <person name="Choisne N."/>
            <person name="Artiguenave F."/>
            <person name="Robert C."/>
            <person name="Brottier P."/>
            <person name="Wincker P."/>
            <person name="Cattolico L."/>
            <person name="Weissenbach J."/>
            <person name="Saurin W."/>
            <person name="Quetier F."/>
            <person name="Schaefer M."/>
            <person name="Mueller-Auer S."/>
            <person name="Gabel C."/>
            <person name="Fuchs M."/>
            <person name="Benes V."/>
            <person name="Wurmbach E."/>
            <person name="Drzonek H."/>
            <person name="Erfle H."/>
            <person name="Jordan N."/>
            <person name="Bangert S."/>
            <person name="Wiedelmann R."/>
            <person name="Kranz H."/>
            <person name="Voss H."/>
            <person name="Holland R."/>
            <person name="Brandt P."/>
            <person name="Nyakatura G."/>
            <person name="Vezzi A."/>
            <person name="D'Angelo M."/>
            <person name="Pallavicini A."/>
            <person name="Toppo S."/>
            <person name="Simionati B."/>
            <person name="Conrad A."/>
            <person name="Hornischer K."/>
            <person name="Kauer G."/>
            <person name="Loehnert T.-H."/>
            <person name="Nordsiek G."/>
            <person name="Reichelt J."/>
            <person name="Scharfe M."/>
            <person name="Schoen O."/>
            <person name="Bargues M."/>
            <person name="Terol J."/>
            <person name="Climent J."/>
            <person name="Navarro P."/>
            <person name="Collado C."/>
            <person name="Perez-Perez A."/>
            <person name="Ottenwaelder B."/>
            <person name="Duchemin D."/>
            <person name="Cooke R."/>
            <person name="Laudie M."/>
            <person name="Berger-Llauro C."/>
            <person name="Purnelle B."/>
            <person name="Masuy D."/>
            <person name="de Haan M."/>
            <person name="Maarse A.C."/>
            <person name="Alcaraz J.-P."/>
            <person name="Cottet A."/>
            <person name="Casacuberta E."/>
            <person name="Monfort A."/>
            <person name="Argiriou A."/>
            <person name="Flores M."/>
            <person name="Liguori R."/>
            <person name="Vitale D."/>
            <person name="Mannhaupt G."/>
            <person name="Haase D."/>
            <person name="Schoof H."/>
            <person name="Rudd S."/>
            <person name="Zaccaria P."/>
            <person name="Mewes H.-W."/>
            <person name="Mayer K.F.X."/>
            <person name="Kaul S."/>
            <person name="Town C.D."/>
            <person name="Koo H.L."/>
            <person name="Tallon L.J."/>
            <person name="Jenkins J."/>
            <person name="Rooney T."/>
            <person name="Rizzo M."/>
            <person name="Walts A."/>
            <person name="Utterback T."/>
            <person name="Fujii C.Y."/>
            <person name="Shea T.P."/>
            <person name="Creasy T.H."/>
            <person name="Haas B."/>
            <person name="Maiti R."/>
            <person name="Wu D."/>
            <person name="Peterson J."/>
            <person name="Van Aken S."/>
            <person name="Pai G."/>
            <person name="Militscher J."/>
            <person name="Sellers P."/>
            <person name="Gill J.E."/>
            <person name="Feldblyum T.V."/>
            <person name="Preuss D."/>
            <person name="Lin X."/>
            <person name="Nierman W.C."/>
            <person name="Salzberg S.L."/>
            <person name="White O."/>
            <person name="Venter J.C."/>
            <person name="Fraser C.M."/>
            <person name="Kaneko T."/>
            <person name="Nakamura Y."/>
            <person name="Sato S."/>
            <person name="Kato T."/>
            <person name="Asamizu E."/>
            <person name="Sasamoto S."/>
            <person name="Kimura T."/>
            <person name="Idesawa K."/>
            <person name="Kawashima K."/>
            <person name="Kishida Y."/>
            <person name="Kiyokawa C."/>
            <person name="Kohara M."/>
            <person name="Matsumoto M."/>
            <person name="Matsuno A."/>
            <person name="Muraki A."/>
            <person name="Nakayama S."/>
            <person name="Nakazaki N."/>
            <person name="Shinpo S."/>
            <person name="Takeuchi C."/>
            <person name="Wada T."/>
            <person name="Watanabe A."/>
            <person name="Yamada M."/>
            <person name="Yasuda M."/>
            <person name="Tabata S."/>
        </authorList>
    </citation>
    <scope>NUCLEOTIDE SEQUENCE [LARGE SCALE GENOMIC DNA]</scope>
    <source>
        <strain>cv. Columbia</strain>
    </source>
</reference>
<reference key="3">
    <citation type="journal article" date="2017" name="Plant J.">
        <title>Araport11: a complete reannotation of the Arabidopsis thaliana reference genome.</title>
        <authorList>
            <person name="Cheng C.Y."/>
            <person name="Krishnakumar V."/>
            <person name="Chan A.P."/>
            <person name="Thibaud-Nissen F."/>
            <person name="Schobel S."/>
            <person name="Town C.D."/>
        </authorList>
    </citation>
    <scope>GENOME REANNOTATION</scope>
    <source>
        <strain>cv. Columbia</strain>
    </source>
</reference>
<reference key="4">
    <citation type="journal article" date="2003" name="Science">
        <title>Empirical analysis of transcriptional activity in the Arabidopsis genome.</title>
        <authorList>
            <person name="Yamada K."/>
            <person name="Lim J."/>
            <person name="Dale J.M."/>
            <person name="Chen H."/>
            <person name="Shinn P."/>
            <person name="Palm C.J."/>
            <person name="Southwick A.M."/>
            <person name="Wu H.C."/>
            <person name="Kim C.J."/>
            <person name="Nguyen M."/>
            <person name="Pham P.K."/>
            <person name="Cheuk R.F."/>
            <person name="Karlin-Newmann G."/>
            <person name="Liu S.X."/>
            <person name="Lam B."/>
            <person name="Sakano H."/>
            <person name="Wu T."/>
            <person name="Yu G."/>
            <person name="Miranda M."/>
            <person name="Quach H.L."/>
            <person name="Tripp M."/>
            <person name="Chang C.H."/>
            <person name="Lee J.M."/>
            <person name="Toriumi M.J."/>
            <person name="Chan M.M."/>
            <person name="Tang C.C."/>
            <person name="Onodera C.S."/>
            <person name="Deng J.M."/>
            <person name="Akiyama K."/>
            <person name="Ansari Y."/>
            <person name="Arakawa T."/>
            <person name="Banh J."/>
            <person name="Banno F."/>
            <person name="Bowser L."/>
            <person name="Brooks S.Y."/>
            <person name="Carninci P."/>
            <person name="Chao Q."/>
            <person name="Choy N."/>
            <person name="Enju A."/>
            <person name="Goldsmith A.D."/>
            <person name="Gurjal M."/>
            <person name="Hansen N.F."/>
            <person name="Hayashizaki Y."/>
            <person name="Johnson-Hopson C."/>
            <person name="Hsuan V.W."/>
            <person name="Iida K."/>
            <person name="Karnes M."/>
            <person name="Khan S."/>
            <person name="Koesema E."/>
            <person name="Ishida J."/>
            <person name="Jiang P.X."/>
            <person name="Jones T."/>
            <person name="Kawai J."/>
            <person name="Kamiya A."/>
            <person name="Meyers C."/>
            <person name="Nakajima M."/>
            <person name="Narusaka M."/>
            <person name="Seki M."/>
            <person name="Sakurai T."/>
            <person name="Satou M."/>
            <person name="Tamse R."/>
            <person name="Vaysberg M."/>
            <person name="Wallender E.K."/>
            <person name="Wong C."/>
            <person name="Yamamura Y."/>
            <person name="Yuan S."/>
            <person name="Shinozaki K."/>
            <person name="Davis R.W."/>
            <person name="Theologis A."/>
            <person name="Ecker J.R."/>
        </authorList>
    </citation>
    <scope>NUCLEOTIDE SEQUENCE [LARGE SCALE MRNA]</scope>
    <source>
        <strain>cv. Columbia</strain>
    </source>
</reference>
<reference key="5">
    <citation type="submission" date="2002-03" db="EMBL/GenBank/DDBJ databases">
        <title>Full-length cDNA from Arabidopsis thaliana.</title>
        <authorList>
            <person name="Brover V.V."/>
            <person name="Troukhan M.E."/>
            <person name="Alexandrov N.A."/>
            <person name="Lu Y.-P."/>
            <person name="Flavell R.B."/>
            <person name="Feldmann K.A."/>
        </authorList>
    </citation>
    <scope>NUCLEOTIDE SEQUENCE [LARGE SCALE MRNA]</scope>
</reference>
<reference key="6">
    <citation type="journal article" date="2005" name="Proc. Natl. Acad. Sci. U.S.A.">
        <title>Glutathionylation of chloroplast thioredoxin f is a redox signaling mechanism in plants.</title>
        <authorList>
            <person name="Michelet L."/>
            <person name="Zaffagnini M."/>
            <person name="Marchand C."/>
            <person name="Collin V."/>
            <person name="Decottignies P."/>
            <person name="Tsan P."/>
            <person name="Lancelin J.M."/>
            <person name="Trost P."/>
            <person name="Miginiac-Maslow M."/>
            <person name="Noctor G."/>
            <person name="Lemaire S.D."/>
        </authorList>
    </citation>
    <scope>FUNCTION</scope>
    <scope>GLUTATHIONYLATION AT CYS-126</scope>
    <scope>IDENTIFICATION BY MASS SPECTROMETRY</scope>
</reference>
<reference key="7">
    <citation type="journal article" date="2009" name="FEBS Lett.">
        <title>Redox regulation of chloroplastic glucose-6-phosphate dehydrogenase: a new role for f-type thioredoxin.</title>
        <authorList>
            <person name="Nee G."/>
            <person name="Zaffagnini M."/>
            <person name="Trost P."/>
            <person name="Issakidis-Bourguet E."/>
        </authorList>
    </citation>
    <scope>FUNCTION</scope>
</reference>
<reference key="8">
    <citation type="journal article" date="2009" name="Mol. Plant">
        <title>Prompt and easy activation by specific thioredoxins of calvin cycle enzymes of Arabidopsis thaliana associated in the GAPDH/CP12/PRK supramolecular complex.</title>
        <authorList>
            <person name="Marri L."/>
            <person name="Zaffagnini M."/>
            <person name="Collin V."/>
            <person name="Issakidis-Bourguet E."/>
            <person name="Lemaire S.D."/>
            <person name="Pupillo P."/>
            <person name="Sparla F."/>
            <person name="Miginiac-Maslow M."/>
            <person name="Trost P."/>
        </authorList>
    </citation>
    <scope>FUNCTION</scope>
</reference>
<reference key="9">
    <citation type="journal article" date="2009" name="Mol. Plant">
        <title>Comparative genomic study of the thioredoxin family in photosynthetic organisms with emphasis on Populus trichocarpa.</title>
        <authorList>
            <person name="Chibani K."/>
            <person name="Wingsle G."/>
            <person name="Jacquot J.P."/>
            <person name="Gelhaye E."/>
            <person name="Rouhier N."/>
        </authorList>
    </citation>
    <scope>GENE FAMILY</scope>
    <scope>NOMENCLATURE</scope>
</reference>
<reference key="10">
    <citation type="journal article" date="2009" name="Plant Mol. Biol.">
        <title>A novel extended family of stromal thioredoxins.</title>
        <authorList>
            <person name="Cain P."/>
            <person name="Hall M."/>
            <person name="Schroder W.P."/>
            <person name="Kieselbach T."/>
            <person name="Robinson C."/>
        </authorList>
    </citation>
    <scope>SUBCELLULAR LOCATION</scope>
</reference>
<accession>Q9XFH8</accession>
<accession>Q9M8R5</accession>
<dbReference type="EMBL" id="AF144385">
    <property type="protein sequence ID" value="AAD35003.1"/>
    <property type="molecule type" value="mRNA"/>
</dbReference>
<dbReference type="EMBL" id="AC018363">
    <property type="protein sequence ID" value="AAF26987.1"/>
    <property type="molecule type" value="Genomic_DNA"/>
</dbReference>
<dbReference type="EMBL" id="CP002686">
    <property type="protein sequence ID" value="AEE73852.1"/>
    <property type="molecule type" value="Genomic_DNA"/>
</dbReference>
<dbReference type="EMBL" id="AY065391">
    <property type="protein sequence ID" value="AAL38832.1"/>
    <property type="molecule type" value="mRNA"/>
</dbReference>
<dbReference type="EMBL" id="AY096721">
    <property type="protein sequence ID" value="AAM20355.1"/>
    <property type="molecule type" value="mRNA"/>
</dbReference>
<dbReference type="EMBL" id="AY084778">
    <property type="protein sequence ID" value="AAM61345.1"/>
    <property type="molecule type" value="mRNA"/>
</dbReference>
<dbReference type="SMR" id="Q9XFH8"/>
<dbReference type="BioGRID" id="6593">
    <property type="interactions" value="2"/>
</dbReference>
<dbReference type="FunCoup" id="Q9XFH8">
    <property type="interactions" value="1052"/>
</dbReference>
<dbReference type="STRING" id="3702.Q9XFH8"/>
<dbReference type="iPTMnet" id="Q9XFH8"/>
<dbReference type="PaxDb" id="3702-AT3G02730.1"/>
<dbReference type="ProteomicsDB" id="232451"/>
<dbReference type="EnsemblPlants" id="AT3G02730.1">
    <property type="protein sequence ID" value="AT3G02730.1"/>
    <property type="gene ID" value="AT3G02730"/>
</dbReference>
<dbReference type="Gramene" id="AT3G02730.1">
    <property type="protein sequence ID" value="AT3G02730.1"/>
    <property type="gene ID" value="AT3G02730"/>
</dbReference>
<dbReference type="KEGG" id="ath:AT3G02730"/>
<dbReference type="Araport" id="AT3G02730"/>
<dbReference type="TAIR" id="AT3G02730">
    <property type="gene designation" value="TRXF1"/>
</dbReference>
<dbReference type="eggNOG" id="KOG0907">
    <property type="taxonomic scope" value="Eukaryota"/>
</dbReference>
<dbReference type="HOGENOM" id="CLU_090389_9_0_1"/>
<dbReference type="InParanoid" id="Q9XFH8"/>
<dbReference type="OMA" id="TTKIGFC"/>
<dbReference type="OrthoDB" id="10263751at2759"/>
<dbReference type="PhylomeDB" id="Q9XFH8"/>
<dbReference type="PRO" id="PR:Q9XFH8"/>
<dbReference type="Proteomes" id="UP000006548">
    <property type="component" value="Chromosome 3"/>
</dbReference>
<dbReference type="ExpressionAtlas" id="Q9XFH8">
    <property type="expression patterns" value="baseline and differential"/>
</dbReference>
<dbReference type="GO" id="GO:0009507">
    <property type="term" value="C:chloroplast"/>
    <property type="evidence" value="ECO:0007005"/>
    <property type="project" value="TAIR"/>
</dbReference>
<dbReference type="GO" id="GO:0009570">
    <property type="term" value="C:chloroplast stroma"/>
    <property type="evidence" value="ECO:0007005"/>
    <property type="project" value="TAIR"/>
</dbReference>
<dbReference type="GO" id="GO:0009534">
    <property type="term" value="C:chloroplast thylakoid"/>
    <property type="evidence" value="ECO:0007005"/>
    <property type="project" value="TAIR"/>
</dbReference>
<dbReference type="GO" id="GO:0005829">
    <property type="term" value="C:cytosol"/>
    <property type="evidence" value="ECO:0007005"/>
    <property type="project" value="TAIR"/>
</dbReference>
<dbReference type="GO" id="GO:0008047">
    <property type="term" value="F:enzyme activator activity"/>
    <property type="evidence" value="ECO:0000314"/>
    <property type="project" value="UniProtKB"/>
</dbReference>
<dbReference type="GO" id="GO:0004857">
    <property type="term" value="F:enzyme inhibitor activity"/>
    <property type="evidence" value="ECO:0000314"/>
    <property type="project" value="UniProtKB"/>
</dbReference>
<dbReference type="GO" id="GO:0019904">
    <property type="term" value="F:protein domain specific binding"/>
    <property type="evidence" value="ECO:0000353"/>
    <property type="project" value="CAFA"/>
</dbReference>
<dbReference type="GO" id="GO:0045454">
    <property type="term" value="P:cell redox homeostasis"/>
    <property type="evidence" value="ECO:0000316"/>
    <property type="project" value="TAIR"/>
</dbReference>
<dbReference type="GO" id="GO:0043086">
    <property type="term" value="P:negative regulation of catalytic activity"/>
    <property type="evidence" value="ECO:0000314"/>
    <property type="project" value="UniProtKB"/>
</dbReference>
<dbReference type="GO" id="GO:0043085">
    <property type="term" value="P:positive regulation of catalytic activity"/>
    <property type="evidence" value="ECO:0000314"/>
    <property type="project" value="UniProtKB"/>
</dbReference>
<dbReference type="GO" id="GO:0006109">
    <property type="term" value="P:regulation of carbohydrate metabolic process"/>
    <property type="evidence" value="ECO:0000314"/>
    <property type="project" value="UniProtKB"/>
</dbReference>
<dbReference type="GO" id="GO:0009642">
    <property type="term" value="P:response to light intensity"/>
    <property type="evidence" value="ECO:0000316"/>
    <property type="project" value="TAIR"/>
</dbReference>
<dbReference type="CDD" id="cd02947">
    <property type="entry name" value="TRX_family"/>
    <property type="match status" value="1"/>
</dbReference>
<dbReference type="FunFam" id="3.40.30.10:FF:000250">
    <property type="entry name" value="Thioredoxin F-type, chloroplastic"/>
    <property type="match status" value="1"/>
</dbReference>
<dbReference type="Gene3D" id="3.40.30.10">
    <property type="entry name" value="Glutaredoxin"/>
    <property type="match status" value="1"/>
</dbReference>
<dbReference type="InterPro" id="IPR036249">
    <property type="entry name" value="Thioredoxin-like_sf"/>
</dbReference>
<dbReference type="InterPro" id="IPR017937">
    <property type="entry name" value="Thioredoxin_CS"/>
</dbReference>
<dbReference type="InterPro" id="IPR013766">
    <property type="entry name" value="Thioredoxin_domain"/>
</dbReference>
<dbReference type="PANTHER" id="PTHR46115">
    <property type="entry name" value="THIOREDOXIN-LIKE PROTEIN 1"/>
    <property type="match status" value="1"/>
</dbReference>
<dbReference type="Pfam" id="PF00085">
    <property type="entry name" value="Thioredoxin"/>
    <property type="match status" value="1"/>
</dbReference>
<dbReference type="PRINTS" id="PR00421">
    <property type="entry name" value="THIOREDOXIN"/>
</dbReference>
<dbReference type="SUPFAM" id="SSF52833">
    <property type="entry name" value="Thioredoxin-like"/>
    <property type="match status" value="1"/>
</dbReference>
<dbReference type="PROSITE" id="PS00194">
    <property type="entry name" value="THIOREDOXIN_1"/>
    <property type="match status" value="1"/>
</dbReference>
<dbReference type="PROSITE" id="PS51352">
    <property type="entry name" value="THIOREDOXIN_2"/>
    <property type="match status" value="1"/>
</dbReference>
<protein>
    <recommendedName>
        <fullName>Thioredoxin F1, chloroplastic</fullName>
        <shortName>AtTrxf1</shortName>
    </recommendedName>
    <alternativeName>
        <fullName>Thioredoxin F2</fullName>
        <shortName>AtTrxf2</shortName>
    </alternativeName>
</protein>
<organism>
    <name type="scientific">Arabidopsis thaliana</name>
    <name type="common">Mouse-ear cress</name>
    <dbReference type="NCBI Taxonomy" id="3702"/>
    <lineage>
        <taxon>Eukaryota</taxon>
        <taxon>Viridiplantae</taxon>
        <taxon>Streptophyta</taxon>
        <taxon>Embryophyta</taxon>
        <taxon>Tracheophyta</taxon>
        <taxon>Spermatophyta</taxon>
        <taxon>Magnoliopsida</taxon>
        <taxon>eudicotyledons</taxon>
        <taxon>Gunneridae</taxon>
        <taxon>Pentapetalae</taxon>
        <taxon>rosids</taxon>
        <taxon>malvids</taxon>
        <taxon>Brassicales</taxon>
        <taxon>Brassicaceae</taxon>
        <taxon>Camelineae</taxon>
        <taxon>Arabidopsis</taxon>
    </lineage>
</organism>
<sequence>MPLSLRLSPSPTALSPTTGGFGPSRKQCRIPYSGVPTTKIGFCSLDSRKRGDSSVVRCSLETVNVSVGQVTEVDKDTFWPIVKAAGEKLVVLDMYTQWCGPCKVIAPKYKALSEKYDDVVFLKLDCNPDNRPLAKELGIRVVPTFKILKDNKVVKEVTGAKYDDLVAAIETARSAASG</sequence>
<keyword id="KW-0150">Chloroplast</keyword>
<keyword id="KW-1015">Disulfide bond</keyword>
<keyword id="KW-0249">Electron transport</keyword>
<keyword id="KW-0318">Glutathionylation</keyword>
<keyword id="KW-0934">Plastid</keyword>
<keyword id="KW-0676">Redox-active center</keyword>
<keyword id="KW-1185">Reference proteome</keyword>
<keyword id="KW-0809">Transit peptide</keyword>
<keyword id="KW-0813">Transport</keyword>
<proteinExistence type="evidence at protein level"/>
<comment type="function">
    <text evidence="5 7 8">Thiol-disulfide oxidoreductase involved in the redox regulation of enzymes of both reductive pentose phosphate pathway (Calvin-Benson cycle) and oxidative pentose phosphate pathway. Under light or reducing conditions, activates in chloroplast the glyceraldehyde-3-phosphate dehydrogenase, the phosphoribulokinase and the fructose-1,6-bisphosphate phosphatase, and inhibits the glucose-6-phosphate dehydrogenase.</text>
</comment>
<comment type="subcellular location">
    <subcellularLocation>
        <location evidence="6">Plastid</location>
        <location evidence="6">Chloroplast stroma</location>
    </subcellularLocation>
</comment>
<comment type="PTM">
    <text evidence="5">Glutathionylation at Cys-126 decreases its ability to be reduced by ferredoxin-thioredoxin reductase and reduces its efficiency in activating target chloroplastic enzymes.</text>
</comment>
<comment type="similarity">
    <text evidence="9">Belongs to the thioredoxin family. Plant F-type subfamily.</text>
</comment>